<evidence type="ECO:0000250" key="1">
    <source>
        <dbReference type="UniProtKB" id="C0HKH0"/>
    </source>
</evidence>
<evidence type="ECO:0000255" key="2">
    <source>
        <dbReference type="PROSITE-ProRule" id="PRU00395"/>
    </source>
</evidence>
<evidence type="ECO:0000269" key="3">
    <source>
    </source>
</evidence>
<evidence type="ECO:0000303" key="4">
    <source>
    </source>
</evidence>
<evidence type="ECO:0000305" key="5"/>
<protein>
    <recommendedName>
        <fullName evidence="4">Cyclotide hyen-E</fullName>
    </recommendedName>
</protein>
<keyword id="KW-0903">Direct protein sequencing</keyword>
<keyword id="KW-1015">Disulfide bond</keyword>
<keyword id="KW-0960">Knottin</keyword>
<keyword id="KW-0611">Plant defense</keyword>
<sequence>GVPCGESCVYIPCFTGIINCSCRDKVCYNN</sequence>
<dbReference type="SMR" id="C0HLN9"/>
<dbReference type="GO" id="GO:0051715">
    <property type="term" value="P:cytolysis in another organism"/>
    <property type="evidence" value="ECO:0000314"/>
    <property type="project" value="UniProtKB"/>
</dbReference>
<dbReference type="GO" id="GO:0006952">
    <property type="term" value="P:defense response"/>
    <property type="evidence" value="ECO:0000314"/>
    <property type="project" value="UniProtKB"/>
</dbReference>
<dbReference type="InterPro" id="IPR005535">
    <property type="entry name" value="Cyclotide"/>
</dbReference>
<dbReference type="InterPro" id="IPR012323">
    <property type="entry name" value="Cyclotide_bracelet_CS"/>
</dbReference>
<dbReference type="InterPro" id="IPR036146">
    <property type="entry name" value="Cyclotide_sf"/>
</dbReference>
<dbReference type="Pfam" id="PF03784">
    <property type="entry name" value="Cyclotide"/>
    <property type="match status" value="1"/>
</dbReference>
<dbReference type="PIRSF" id="PIRSF037891">
    <property type="entry name" value="Cycloviolacin"/>
    <property type="match status" value="1"/>
</dbReference>
<dbReference type="SUPFAM" id="SSF57038">
    <property type="entry name" value="Cyclotides"/>
    <property type="match status" value="1"/>
</dbReference>
<dbReference type="PROSITE" id="PS51052">
    <property type="entry name" value="CYCLOTIDE"/>
    <property type="match status" value="1"/>
</dbReference>
<dbReference type="PROSITE" id="PS60008">
    <property type="entry name" value="CYCLOTIDE_BRACELET"/>
    <property type="match status" value="1"/>
</dbReference>
<name>CYHEE_PIGEN</name>
<proteinExistence type="evidence at protein level"/>
<accession>C0HLN9</accession>
<reference evidence="5" key="1">
    <citation type="journal article" date="2020" name="J. Biol. Chem.">
        <title>Discovery and mechanistic studies of cytotoxic cyclotides from the medicinal herb Hybanthus enneaspermus.</title>
        <authorList>
            <person name="Du Q."/>
            <person name="Chan L.Y."/>
            <person name="Gilding E.K."/>
            <person name="Henriques S.T."/>
            <person name="Condon N.D."/>
            <person name="Ravipati A.S."/>
            <person name="Kaas Q."/>
            <person name="Huang Y.H."/>
            <person name="Craik D.J."/>
        </authorList>
    </citation>
    <scope>PROTEIN SEQUENCE</scope>
    <scope>MASS SPECTROMETRY</scope>
    <scope>FUNCTION</scope>
    <scope>TISSUE SPECIFICITY</scope>
    <scope>DOMAIN</scope>
    <scope>DISULFIDE BONDS</scope>
</reference>
<organism evidence="4">
    <name type="scientific">Pigea enneasperma</name>
    <name type="common">Spade flower</name>
    <name type="synonym">Afrohybanthus enneaspermus</name>
    <dbReference type="NCBI Taxonomy" id="212266"/>
    <lineage>
        <taxon>Eukaryota</taxon>
        <taxon>Viridiplantae</taxon>
        <taxon>Streptophyta</taxon>
        <taxon>Embryophyta</taxon>
        <taxon>Tracheophyta</taxon>
        <taxon>Spermatophyta</taxon>
        <taxon>Magnoliopsida</taxon>
        <taxon>eudicotyledons</taxon>
        <taxon>Gunneridae</taxon>
        <taxon>Pentapetalae</taxon>
        <taxon>rosids</taxon>
        <taxon>fabids</taxon>
        <taxon>Malpighiales</taxon>
        <taxon>Violaceae</taxon>
        <taxon>Pigea</taxon>
    </lineage>
</organism>
<comment type="function">
    <text evidence="2 3">Probably participates in a plant defense mechanism (By similarity). Has cytotoxic activity against HUVEC cells (LC(50)= 2.17 uM) and various cancer cells including HeLa (LC(50)= 3.05 uM), MCF-7 and K562 (PubMed:32414842). Displays very weak hemolytic activity (PubMed:32414842). Binds to and induces leakage in phospholipd membranes, particularly ones containing 1-palmitoyl-2-oleophosphatidylethanolamine (POPE) (PubMed:32414842).</text>
</comment>
<comment type="tissue specificity">
    <text evidence="3">Detected in stems (at protein level).</text>
</comment>
<comment type="domain">
    <text evidence="5">The presence of a 'disulfide through disulfide knot' structurally defines this protein as a knottin.</text>
</comment>
<comment type="PTM">
    <text evidence="2">This is a cyclic peptide.</text>
</comment>
<comment type="mass spectrometry"/>
<comment type="similarity">
    <text evidence="2">Belongs to the cyclotide family. Bracelet subfamily.</text>
</comment>
<comment type="caution">
    <text evidence="2">This peptide is cyclic. The start position was chosen by similarity to Oak1 (kalata B1) for which the DNA sequence is known.</text>
</comment>
<feature type="peptide" id="PRO_0000450761" description="Cyclotide hyen-E" evidence="2">
    <location>
        <begin position="1"/>
        <end position="30"/>
    </location>
</feature>
<feature type="disulfide bond" evidence="2 3">
    <location>
        <begin position="4"/>
        <end position="20"/>
    </location>
</feature>
<feature type="disulfide bond" evidence="2 3">
    <location>
        <begin position="8"/>
        <end position="22"/>
    </location>
</feature>
<feature type="disulfide bond" evidence="2 3">
    <location>
        <begin position="13"/>
        <end position="27"/>
    </location>
</feature>
<feature type="cross-link" description="Cyclopeptide (Gly-Asn)" evidence="1">
    <location>
        <begin position="1"/>
        <end position="30"/>
    </location>
</feature>